<accession>O17624</accession>
<accession>O17625</accession>
<accession>Q27491</accession>
<accession>Q9TVN5</accession>
<comment type="function">
    <text evidence="3 4">Cytochromes P450 are a group of heme-thiolate monooxygenases (Probable). They oxidize a variety of structurally unrelated compounds, including steroids, fatty acids, and xenobiotics (Probable). May play a role in the regulation of lifespan (PubMed:19575768).</text>
</comment>
<comment type="cofactor">
    <cofactor evidence="1">
        <name>heme</name>
        <dbReference type="ChEBI" id="CHEBI:30413"/>
    </cofactor>
</comment>
<comment type="disruption phenotype">
    <text evidence="3">RNAi-mediated knockdown results in a 25% increase in lifespan.</text>
</comment>
<comment type="similarity">
    <text evidence="2">Belongs to the cytochrome P450 family.</text>
</comment>
<keyword id="KW-0349">Heme</keyword>
<keyword id="KW-0408">Iron</keyword>
<keyword id="KW-0479">Metal-binding</keyword>
<keyword id="KW-0503">Monooxygenase</keyword>
<keyword id="KW-0560">Oxidoreductase</keyword>
<keyword id="KW-1185">Reference proteome</keyword>
<protein>
    <recommendedName>
        <fullName>Putative cytochrome P450 cyp-13B1</fullName>
        <ecNumber>1.14.-.-</ecNumber>
    </recommendedName>
</protein>
<name>C13B1_CAEEL</name>
<organism>
    <name type="scientific">Caenorhabditis elegans</name>
    <dbReference type="NCBI Taxonomy" id="6239"/>
    <lineage>
        <taxon>Eukaryota</taxon>
        <taxon>Metazoa</taxon>
        <taxon>Ecdysozoa</taxon>
        <taxon>Nematoda</taxon>
        <taxon>Chromadorea</taxon>
        <taxon>Rhabditida</taxon>
        <taxon>Rhabditina</taxon>
        <taxon>Rhabditomorpha</taxon>
        <taxon>Rhabditoidea</taxon>
        <taxon>Rhabditidae</taxon>
        <taxon>Peloderinae</taxon>
        <taxon>Caenorhabditis</taxon>
    </lineage>
</organism>
<evidence type="ECO:0000250" key="1">
    <source>
        <dbReference type="UniProtKB" id="Q16678"/>
    </source>
</evidence>
<evidence type="ECO:0000255" key="2"/>
<evidence type="ECO:0000269" key="3">
    <source>
    </source>
</evidence>
<evidence type="ECO:0000305" key="4"/>
<evidence type="ECO:0000312" key="5">
    <source>
        <dbReference type="WormBase" id="F02C12.5"/>
    </source>
</evidence>
<dbReference type="EC" id="1.14.-.-"/>
<dbReference type="EMBL" id="Z54269">
    <property type="protein sequence ID" value="CAB54208.1"/>
    <property type="molecule type" value="Genomic_DNA"/>
</dbReference>
<dbReference type="EMBL" id="Z92827">
    <property type="protein sequence ID" value="CAB54208.1"/>
    <property type="status" value="JOINED"/>
    <property type="molecule type" value="Genomic_DNA"/>
</dbReference>
<dbReference type="PIR" id="T19575">
    <property type="entry name" value="T19575"/>
</dbReference>
<dbReference type="PIR" id="T19576">
    <property type="entry name" value="T19576"/>
</dbReference>
<dbReference type="PIR" id="T19577">
    <property type="entry name" value="T19577"/>
</dbReference>
<dbReference type="RefSeq" id="NP_510233.1">
    <property type="nucleotide sequence ID" value="NM_077832.6"/>
</dbReference>
<dbReference type="SMR" id="O17624"/>
<dbReference type="BioGRID" id="46365">
    <property type="interactions" value="1"/>
</dbReference>
<dbReference type="DIP" id="DIP-25013N"/>
<dbReference type="FunCoup" id="O17624">
    <property type="interactions" value="100"/>
</dbReference>
<dbReference type="STRING" id="6239.F02C12.5.1"/>
<dbReference type="PaxDb" id="6239-F02C12.5a"/>
<dbReference type="PeptideAtlas" id="O17624"/>
<dbReference type="EnsemblMetazoa" id="F02C12.5.1">
    <property type="protein sequence ID" value="F02C12.5.1"/>
    <property type="gene ID" value="WBGene00008519"/>
</dbReference>
<dbReference type="GeneID" id="181462"/>
<dbReference type="KEGG" id="cel:CELE_F02C12.5"/>
<dbReference type="UCSC" id="F02C12.5c">
    <property type="organism name" value="c. elegans"/>
</dbReference>
<dbReference type="AGR" id="WB:WBGene00008519"/>
<dbReference type="CTD" id="181462"/>
<dbReference type="WormBase" id="F02C12.5">
    <property type="protein sequence ID" value="CE23627"/>
    <property type="gene ID" value="WBGene00008519"/>
    <property type="gene designation" value="cyp-13B1"/>
</dbReference>
<dbReference type="eggNOG" id="KOG0158">
    <property type="taxonomic scope" value="Eukaryota"/>
</dbReference>
<dbReference type="GeneTree" id="ENSGT00970000196718"/>
<dbReference type="InParanoid" id="O17624"/>
<dbReference type="OrthoDB" id="2789670at2759"/>
<dbReference type="PhylomeDB" id="O17624"/>
<dbReference type="PRO" id="PR:O17624"/>
<dbReference type="Proteomes" id="UP000001940">
    <property type="component" value="Chromosome X"/>
</dbReference>
<dbReference type="Bgee" id="WBGene00008519">
    <property type="expression patterns" value="Expressed in embryo and 3 other cell types or tissues"/>
</dbReference>
<dbReference type="GO" id="GO:0020037">
    <property type="term" value="F:heme binding"/>
    <property type="evidence" value="ECO:0007669"/>
    <property type="project" value="InterPro"/>
</dbReference>
<dbReference type="GO" id="GO:0005506">
    <property type="term" value="F:iron ion binding"/>
    <property type="evidence" value="ECO:0007669"/>
    <property type="project" value="InterPro"/>
</dbReference>
<dbReference type="GO" id="GO:0004497">
    <property type="term" value="F:monooxygenase activity"/>
    <property type="evidence" value="ECO:0007669"/>
    <property type="project" value="UniProtKB-KW"/>
</dbReference>
<dbReference type="GO" id="GO:0016705">
    <property type="term" value="F:oxidoreductase activity, acting on paired donors, with incorporation or reduction of molecular oxygen"/>
    <property type="evidence" value="ECO:0007669"/>
    <property type="project" value="InterPro"/>
</dbReference>
<dbReference type="CDD" id="cd11055">
    <property type="entry name" value="CYP3A-like"/>
    <property type="match status" value="1"/>
</dbReference>
<dbReference type="FunFam" id="1.10.630.10:FF:000182">
    <property type="entry name" value="Cytochrome P450 3A4"/>
    <property type="match status" value="1"/>
</dbReference>
<dbReference type="Gene3D" id="1.10.630.10">
    <property type="entry name" value="Cytochrome P450"/>
    <property type="match status" value="1"/>
</dbReference>
<dbReference type="InterPro" id="IPR001128">
    <property type="entry name" value="Cyt_P450"/>
</dbReference>
<dbReference type="InterPro" id="IPR017972">
    <property type="entry name" value="Cyt_P450_CS"/>
</dbReference>
<dbReference type="InterPro" id="IPR002401">
    <property type="entry name" value="Cyt_P450_E_grp-I"/>
</dbReference>
<dbReference type="InterPro" id="IPR036396">
    <property type="entry name" value="Cyt_P450_sf"/>
</dbReference>
<dbReference type="InterPro" id="IPR050476">
    <property type="entry name" value="Insect_CytP450_Detox"/>
</dbReference>
<dbReference type="PANTHER" id="PTHR24292">
    <property type="entry name" value="CYTOCHROME P450"/>
    <property type="match status" value="1"/>
</dbReference>
<dbReference type="PANTHER" id="PTHR24292:SF102">
    <property type="entry name" value="CYTOCHROME P450 FAMILY-RELATED"/>
    <property type="match status" value="1"/>
</dbReference>
<dbReference type="Pfam" id="PF00067">
    <property type="entry name" value="p450"/>
    <property type="match status" value="1"/>
</dbReference>
<dbReference type="PRINTS" id="PR00463">
    <property type="entry name" value="EP450I"/>
</dbReference>
<dbReference type="PRINTS" id="PR00385">
    <property type="entry name" value="P450"/>
</dbReference>
<dbReference type="SUPFAM" id="SSF48264">
    <property type="entry name" value="Cytochrome P450"/>
    <property type="match status" value="1"/>
</dbReference>
<dbReference type="PROSITE" id="PS00086">
    <property type="entry name" value="CYTOCHROME_P450"/>
    <property type="match status" value="1"/>
</dbReference>
<sequence length="510" mass="58260">MGAIIVLVVLFATIAGYFKWIHTYWRRRGISGPEGLPFIGNYYDLADVNKPRGYLIHKWTQKFGKVFGYYEGAVPVLVVSDMDMLQELFLKKFDNFYARKSTNHIHGNLECSKSEPRINLFTSRGARWKRLRALASPGFSVKALKQVHDVMEDSAINMVDLMAKHEDGKPFNIHAYFQEFTYDVISRLAMGQPNSELFNNSGVEIVKSIFMRTHRVLPWYFTVLFPQFEHLVKRMFYNHAAVQGGDIEKLLLICKKTVESRIQEREENAKLGFENAENDFIDMFLNYYSEQVEDIEFGSTVEKKVTAEDVIGACFVFLLAGFDTTANSLAYASYLLAKHPEKMKLAQEEVDTVVGSENVSYDDMTKLKYLDAVVRESLRLYPVAWFACSRECVKPTTLGDIYIDKGVKIEADVMSLHRSKEIWGENADDFVPERWLEPSSRHTMSWIPFGAGPRQCVGMRLGLSEAKTALAHLLRRYDLVAGVETEKELNILGCTTTSPEAVTLYLKPRI</sequence>
<feature type="chain" id="PRO_0000051924" description="Putative cytochrome P450 cyp-13B1">
    <location>
        <begin position="1"/>
        <end position="510"/>
    </location>
</feature>
<feature type="binding site" description="axial binding residue" evidence="1">
    <location>
        <position position="456"/>
    </location>
    <ligand>
        <name>heme</name>
        <dbReference type="ChEBI" id="CHEBI:30413"/>
    </ligand>
    <ligandPart>
        <name>Fe</name>
        <dbReference type="ChEBI" id="CHEBI:18248"/>
    </ligandPart>
</feature>
<gene>
    <name evidence="5" type="primary">cyp-13B1</name>
    <name evidence="5" type="ORF">F02C12.5</name>
</gene>
<reference evidence="4" key="1">
    <citation type="journal article" date="1998" name="Science">
        <title>Genome sequence of the nematode C. elegans: a platform for investigating biology.</title>
        <authorList>
            <consortium name="The C. elegans sequencing consortium"/>
        </authorList>
    </citation>
    <scope>NUCLEOTIDE SEQUENCE [LARGE SCALE GENOMIC DNA]</scope>
    <scope>ALTERNATIVE SPLICING</scope>
    <source>
        <strain>Bristol N2</strain>
    </source>
</reference>
<reference key="2">
    <citation type="journal article" date="2009" name="Aging Cell">
        <title>Condition-adapted stress and longevity gene regulation by Caenorhabditis elegans SKN-1/Nrf.</title>
        <authorList>
            <person name="Oliveira R.P."/>
            <person name="Porter Abate J."/>
            <person name="Dilks K."/>
            <person name="Landis J."/>
            <person name="Ashraf J."/>
            <person name="Murphy C.T."/>
            <person name="Blackwell T.K."/>
        </authorList>
    </citation>
    <scope>FUNCTION</scope>
    <scope>DISRUPTION PHENOTYPE</scope>
</reference>
<proteinExistence type="inferred from homology"/>